<proteinExistence type="inferred from homology"/>
<keyword id="KW-0342">GTP-binding</keyword>
<keyword id="KW-0378">Hydrolase</keyword>
<keyword id="KW-0479">Metal-binding</keyword>
<keyword id="KW-0547">Nucleotide-binding</keyword>
<keyword id="KW-0686">Riboflavin biosynthesis</keyword>
<keyword id="KW-0862">Zinc</keyword>
<organism>
    <name type="scientific">Pseudomonas aeruginosa (strain LESB58)</name>
    <dbReference type="NCBI Taxonomy" id="557722"/>
    <lineage>
        <taxon>Bacteria</taxon>
        <taxon>Pseudomonadati</taxon>
        <taxon>Pseudomonadota</taxon>
        <taxon>Gammaproteobacteria</taxon>
        <taxon>Pseudomonadales</taxon>
        <taxon>Pseudomonadaceae</taxon>
        <taxon>Pseudomonas</taxon>
    </lineage>
</organism>
<name>RIBA_PSEA8</name>
<protein>
    <recommendedName>
        <fullName evidence="1">GTP cyclohydrolase-2</fullName>
        <ecNumber evidence="1">3.5.4.25</ecNumber>
    </recommendedName>
    <alternativeName>
        <fullName evidence="1">GTP cyclohydrolase II</fullName>
    </alternativeName>
</protein>
<evidence type="ECO:0000255" key="1">
    <source>
        <dbReference type="HAMAP-Rule" id="MF_00179"/>
    </source>
</evidence>
<comment type="function">
    <text evidence="1">Catalyzes the conversion of GTP to 2,5-diamino-6-ribosylamino-4(3H)-pyrimidinone 5'-phosphate (DARP), formate and pyrophosphate.</text>
</comment>
<comment type="catalytic activity">
    <reaction evidence="1">
        <text>GTP + 4 H2O = 2,5-diamino-6-hydroxy-4-(5-phosphoribosylamino)-pyrimidine + formate + 2 phosphate + 3 H(+)</text>
        <dbReference type="Rhea" id="RHEA:23704"/>
        <dbReference type="ChEBI" id="CHEBI:15377"/>
        <dbReference type="ChEBI" id="CHEBI:15378"/>
        <dbReference type="ChEBI" id="CHEBI:15740"/>
        <dbReference type="ChEBI" id="CHEBI:37565"/>
        <dbReference type="ChEBI" id="CHEBI:43474"/>
        <dbReference type="ChEBI" id="CHEBI:58614"/>
        <dbReference type="EC" id="3.5.4.25"/>
    </reaction>
</comment>
<comment type="cofactor">
    <cofactor evidence="1">
        <name>Zn(2+)</name>
        <dbReference type="ChEBI" id="CHEBI:29105"/>
    </cofactor>
    <text evidence="1">Binds 1 zinc ion per subunit.</text>
</comment>
<comment type="pathway">
    <text evidence="1">Cofactor biosynthesis; riboflavin biosynthesis; 5-amino-6-(D-ribitylamino)uracil from GTP: step 1/4.</text>
</comment>
<comment type="similarity">
    <text evidence="1">Belongs to the GTP cyclohydrolase II family.</text>
</comment>
<dbReference type="EC" id="3.5.4.25" evidence="1"/>
<dbReference type="EMBL" id="FM209186">
    <property type="protein sequence ID" value="CAW25656.1"/>
    <property type="molecule type" value="Genomic_DNA"/>
</dbReference>
<dbReference type="RefSeq" id="WP_003110510.1">
    <property type="nucleotide sequence ID" value="NC_011770.1"/>
</dbReference>
<dbReference type="SMR" id="B7V7R1"/>
<dbReference type="KEGG" id="pag:PLES_09291"/>
<dbReference type="HOGENOM" id="CLU_020273_2_1_6"/>
<dbReference type="UniPathway" id="UPA00275">
    <property type="reaction ID" value="UER00400"/>
</dbReference>
<dbReference type="GO" id="GO:0005829">
    <property type="term" value="C:cytosol"/>
    <property type="evidence" value="ECO:0007669"/>
    <property type="project" value="TreeGrafter"/>
</dbReference>
<dbReference type="GO" id="GO:0005525">
    <property type="term" value="F:GTP binding"/>
    <property type="evidence" value="ECO:0007669"/>
    <property type="project" value="UniProtKB-KW"/>
</dbReference>
<dbReference type="GO" id="GO:0003935">
    <property type="term" value="F:GTP cyclohydrolase II activity"/>
    <property type="evidence" value="ECO:0007669"/>
    <property type="project" value="UniProtKB-UniRule"/>
</dbReference>
<dbReference type="GO" id="GO:0008270">
    <property type="term" value="F:zinc ion binding"/>
    <property type="evidence" value="ECO:0007669"/>
    <property type="project" value="UniProtKB-UniRule"/>
</dbReference>
<dbReference type="GO" id="GO:0009231">
    <property type="term" value="P:riboflavin biosynthetic process"/>
    <property type="evidence" value="ECO:0007669"/>
    <property type="project" value="UniProtKB-UniRule"/>
</dbReference>
<dbReference type="CDD" id="cd00641">
    <property type="entry name" value="GTP_cyclohydro2"/>
    <property type="match status" value="1"/>
</dbReference>
<dbReference type="FunFam" id="3.40.50.10990:FF:000002">
    <property type="entry name" value="GTP cyclohydrolase-2"/>
    <property type="match status" value="1"/>
</dbReference>
<dbReference type="Gene3D" id="3.40.50.10990">
    <property type="entry name" value="GTP cyclohydrolase II"/>
    <property type="match status" value="1"/>
</dbReference>
<dbReference type="HAMAP" id="MF_00179">
    <property type="entry name" value="RibA"/>
    <property type="match status" value="1"/>
</dbReference>
<dbReference type="InterPro" id="IPR032677">
    <property type="entry name" value="GTP_cyclohydro_II"/>
</dbReference>
<dbReference type="InterPro" id="IPR000926">
    <property type="entry name" value="RibA"/>
</dbReference>
<dbReference type="InterPro" id="IPR036144">
    <property type="entry name" value="RibA-like_sf"/>
</dbReference>
<dbReference type="NCBIfam" id="NF001591">
    <property type="entry name" value="PRK00393.1"/>
    <property type="match status" value="1"/>
</dbReference>
<dbReference type="NCBIfam" id="TIGR00505">
    <property type="entry name" value="ribA"/>
    <property type="match status" value="1"/>
</dbReference>
<dbReference type="PANTHER" id="PTHR21327:SF18">
    <property type="entry name" value="3,4-DIHYDROXY-2-BUTANONE 4-PHOSPHATE SYNTHASE"/>
    <property type="match status" value="1"/>
</dbReference>
<dbReference type="PANTHER" id="PTHR21327">
    <property type="entry name" value="GTP CYCLOHYDROLASE II-RELATED"/>
    <property type="match status" value="1"/>
</dbReference>
<dbReference type="Pfam" id="PF00925">
    <property type="entry name" value="GTP_cyclohydro2"/>
    <property type="match status" value="1"/>
</dbReference>
<dbReference type="SUPFAM" id="SSF142695">
    <property type="entry name" value="RibA-like"/>
    <property type="match status" value="1"/>
</dbReference>
<accession>B7V7R1</accession>
<sequence length="205" mass="22099">MSVVFVAASKLPTPFGEFTMHGFLDEESGKEHVALSMGDIADGAPVLGRLHSECLTGDALFSLRCDCGFQLEGALAAIAEEGRGVLLYLRQEGRGIGLLNKIRAYELQDGGADTVEANLQLGFGADQRDYAMCQPMLAHLGVSSLRLMTNNPRKVKALESYAITVAERVPLQKGLNKHNRRYLATKAGKLGHMLGSLHQGEAETT</sequence>
<gene>
    <name evidence="1" type="primary">ribA</name>
    <name type="ordered locus">PLES_09291</name>
</gene>
<reference key="1">
    <citation type="journal article" date="2009" name="Genome Res.">
        <title>Newly introduced genomic prophage islands are critical determinants of in vivo competitiveness in the Liverpool epidemic strain of Pseudomonas aeruginosa.</title>
        <authorList>
            <person name="Winstanley C."/>
            <person name="Langille M.G.I."/>
            <person name="Fothergill J.L."/>
            <person name="Kukavica-Ibrulj I."/>
            <person name="Paradis-Bleau C."/>
            <person name="Sanschagrin F."/>
            <person name="Thomson N.R."/>
            <person name="Winsor G.L."/>
            <person name="Quail M.A."/>
            <person name="Lennard N."/>
            <person name="Bignell A."/>
            <person name="Clarke L."/>
            <person name="Seeger K."/>
            <person name="Saunders D."/>
            <person name="Harris D."/>
            <person name="Parkhill J."/>
            <person name="Hancock R.E.W."/>
            <person name="Brinkman F.S.L."/>
            <person name="Levesque R.C."/>
        </authorList>
    </citation>
    <scope>NUCLEOTIDE SEQUENCE [LARGE SCALE GENOMIC DNA]</scope>
    <source>
        <strain>LESB58</strain>
    </source>
</reference>
<feature type="chain" id="PRO_1000118432" description="GTP cyclohydrolase-2">
    <location>
        <begin position="1"/>
        <end position="205"/>
    </location>
</feature>
<feature type="active site" description="Proton acceptor" evidence="1">
    <location>
        <position position="126"/>
    </location>
</feature>
<feature type="active site" description="Nucleophile" evidence="1">
    <location>
        <position position="128"/>
    </location>
</feature>
<feature type="binding site" evidence="1">
    <location>
        <begin position="49"/>
        <end position="53"/>
    </location>
    <ligand>
        <name>GTP</name>
        <dbReference type="ChEBI" id="CHEBI:37565"/>
    </ligand>
</feature>
<feature type="binding site" evidence="1">
    <location>
        <position position="54"/>
    </location>
    <ligand>
        <name>Zn(2+)</name>
        <dbReference type="ChEBI" id="CHEBI:29105"/>
        <note>catalytic</note>
    </ligand>
</feature>
<feature type="binding site" evidence="1">
    <location>
        <position position="65"/>
    </location>
    <ligand>
        <name>Zn(2+)</name>
        <dbReference type="ChEBI" id="CHEBI:29105"/>
        <note>catalytic</note>
    </ligand>
</feature>
<feature type="binding site" evidence="1">
    <location>
        <position position="67"/>
    </location>
    <ligand>
        <name>Zn(2+)</name>
        <dbReference type="ChEBI" id="CHEBI:29105"/>
        <note>catalytic</note>
    </ligand>
</feature>
<feature type="binding site" evidence="1">
    <location>
        <position position="70"/>
    </location>
    <ligand>
        <name>GTP</name>
        <dbReference type="ChEBI" id="CHEBI:37565"/>
    </ligand>
</feature>
<feature type="binding site" evidence="1">
    <location>
        <begin position="92"/>
        <end position="94"/>
    </location>
    <ligand>
        <name>GTP</name>
        <dbReference type="ChEBI" id="CHEBI:37565"/>
    </ligand>
</feature>
<feature type="binding site" evidence="1">
    <location>
        <position position="114"/>
    </location>
    <ligand>
        <name>GTP</name>
        <dbReference type="ChEBI" id="CHEBI:37565"/>
    </ligand>
</feature>
<feature type="binding site" evidence="1">
    <location>
        <position position="149"/>
    </location>
    <ligand>
        <name>GTP</name>
        <dbReference type="ChEBI" id="CHEBI:37565"/>
    </ligand>
</feature>
<feature type="binding site" evidence="1">
    <location>
        <position position="154"/>
    </location>
    <ligand>
        <name>GTP</name>
        <dbReference type="ChEBI" id="CHEBI:37565"/>
    </ligand>
</feature>